<feature type="chain" id="PRO_0000328723" description="Cardiomyopathy-associated protein 5">
    <location>
        <begin position="1"/>
        <end position="3739"/>
    </location>
</feature>
<feature type="repeat" description="1">
    <location>
        <begin position="482"/>
        <end position="493"/>
    </location>
</feature>
<feature type="repeat" description="2">
    <location>
        <begin position="494"/>
        <end position="505"/>
    </location>
</feature>
<feature type="repeat" description="3; approximate">
    <location>
        <begin position="506"/>
        <end position="519"/>
    </location>
</feature>
<feature type="repeat" description="4">
    <location>
        <begin position="520"/>
        <end position="531"/>
    </location>
</feature>
<feature type="repeat" description="5; approximate">
    <location>
        <begin position="532"/>
        <end position="545"/>
    </location>
</feature>
<feature type="repeat" description="6; approximate">
    <location>
        <begin position="546"/>
        <end position="559"/>
    </location>
</feature>
<feature type="repeat" description="7">
    <location>
        <begin position="560"/>
        <end position="571"/>
    </location>
</feature>
<feature type="repeat" description="8">
    <location>
        <begin position="572"/>
        <end position="583"/>
    </location>
</feature>
<feature type="repeat" description="9">
    <location>
        <begin position="584"/>
        <end position="595"/>
    </location>
</feature>
<feature type="repeat" description="10">
    <location>
        <begin position="596"/>
        <end position="607"/>
    </location>
</feature>
<feature type="repeat" description="11; approximate">
    <location>
        <begin position="608"/>
        <end position="621"/>
    </location>
</feature>
<feature type="repeat" description="12; approximate">
    <location>
        <begin position="622"/>
        <end position="633"/>
    </location>
</feature>
<feature type="repeat" description="14; approximate">
    <location>
        <begin position="634"/>
        <end position="647"/>
    </location>
</feature>
<feature type="repeat" description="15">
    <location>
        <begin position="648"/>
        <end position="659"/>
    </location>
</feature>
<feature type="repeat" description="16; approximate">
    <location>
        <begin position="660"/>
        <end position="673"/>
    </location>
</feature>
<feature type="repeat" description="17">
    <location>
        <begin position="674"/>
        <end position="685"/>
    </location>
</feature>
<feature type="repeat" description="18">
    <location>
        <begin position="686"/>
        <end position="696"/>
    </location>
</feature>
<feature type="repeat" description="19">
    <location>
        <begin position="697"/>
        <end position="708"/>
    </location>
</feature>
<feature type="repeat" description="20">
    <location>
        <begin position="709"/>
        <end position="720"/>
    </location>
</feature>
<feature type="domain" description="Fibronectin type-III 1" evidence="4">
    <location>
        <begin position="3374"/>
        <end position="3475"/>
    </location>
</feature>
<feature type="domain" description="Fibronectin type-III 2" evidence="4">
    <location>
        <begin position="3476"/>
        <end position="3568"/>
    </location>
</feature>
<feature type="domain" description="B30.2/SPRY" evidence="5">
    <location>
        <begin position="3550"/>
        <end position="3735"/>
    </location>
</feature>
<feature type="region of interest" description="Disordered" evidence="6">
    <location>
        <begin position="1"/>
        <end position="205"/>
    </location>
</feature>
<feature type="region of interest" description="Disordered" evidence="6">
    <location>
        <begin position="268"/>
        <end position="814"/>
    </location>
</feature>
<feature type="region of interest" description="20 X 12 AA approximate tandem repeats of R-[DE]-[EK]-[EG]-H-[AV]-P-E-[PS]-[IM]-V-[HLR]">
    <location>
        <begin position="482"/>
        <end position="720"/>
    </location>
</feature>
<feature type="region of interest" description="Disordered" evidence="6">
    <location>
        <begin position="835"/>
        <end position="884"/>
    </location>
</feature>
<feature type="region of interest" description="Disordered" evidence="6">
    <location>
        <begin position="967"/>
        <end position="1270"/>
    </location>
</feature>
<feature type="region of interest" description="Disordered" evidence="6">
    <location>
        <begin position="1288"/>
        <end position="1313"/>
    </location>
</feature>
<feature type="region of interest" description="Disordered" evidence="6">
    <location>
        <begin position="1325"/>
        <end position="1637"/>
    </location>
</feature>
<feature type="region of interest" description="Disordered" evidence="6">
    <location>
        <begin position="1650"/>
        <end position="1969"/>
    </location>
</feature>
<feature type="region of interest" description="Disordered" evidence="6">
    <location>
        <begin position="1986"/>
        <end position="2016"/>
    </location>
</feature>
<feature type="region of interest" description="Disordered" evidence="6">
    <location>
        <begin position="2065"/>
        <end position="2246"/>
    </location>
</feature>
<feature type="region of interest" description="Disordered" evidence="6">
    <location>
        <begin position="2273"/>
        <end position="2318"/>
    </location>
</feature>
<feature type="region of interest" description="Disordered" evidence="6">
    <location>
        <begin position="2377"/>
        <end position="2498"/>
    </location>
</feature>
<feature type="region of interest" description="Disordered" evidence="6">
    <location>
        <begin position="2513"/>
        <end position="2532"/>
    </location>
</feature>
<feature type="region of interest" description="Disordered" evidence="6">
    <location>
        <begin position="2579"/>
        <end position="2616"/>
    </location>
</feature>
<feature type="region of interest" description="Disordered" evidence="6">
    <location>
        <begin position="2667"/>
        <end position="2725"/>
    </location>
</feature>
<feature type="region of interest" description="Required for RYR2 clustering" evidence="12">
    <location>
        <begin position="2731"/>
        <end position="3041"/>
    </location>
</feature>
<feature type="region of interest" description="Disordered" evidence="6">
    <location>
        <begin position="2742"/>
        <end position="2773"/>
    </location>
</feature>
<feature type="region of interest" description="Disordered" evidence="6">
    <location>
        <begin position="2791"/>
        <end position="2835"/>
    </location>
</feature>
<feature type="region of interest" description="Disordered" evidence="6">
    <location>
        <begin position="2881"/>
        <end position="2959"/>
    </location>
</feature>
<feature type="region of interest" description="Disordered" evidence="6">
    <location>
        <begin position="3027"/>
        <end position="3047"/>
    </location>
</feature>
<feature type="region of interest" description="Disordered" evidence="6">
    <location>
        <begin position="3111"/>
        <end position="3174"/>
    </location>
</feature>
<feature type="region of interest" description="Amphipathic helix H1">
    <location>
        <begin position="3187"/>
        <end position="3214"/>
    </location>
</feature>
<feature type="region of interest" description="B-box coiled-coil; BBC">
    <location>
        <begin position="3215"/>
        <end position="3342"/>
    </location>
</feature>
<feature type="region of interest" description="Amphipathic helix H2">
    <location>
        <begin position="3301"/>
        <end position="3318"/>
    </location>
</feature>
<feature type="region of interest" description="Amphipathic helix H3">
    <location>
        <begin position="3421"/>
        <end position="3437"/>
    </location>
</feature>
<feature type="coiled-coil region" evidence="3">
    <location>
        <begin position="380"/>
        <end position="406"/>
    </location>
</feature>
<feature type="coiled-coil region" evidence="3">
    <location>
        <begin position="2640"/>
        <end position="2664"/>
    </location>
</feature>
<feature type="coiled-coil region" evidence="3">
    <location>
        <begin position="3244"/>
        <end position="3323"/>
    </location>
</feature>
<feature type="compositionally biased region" description="Acidic residues" evidence="6">
    <location>
        <begin position="18"/>
        <end position="47"/>
    </location>
</feature>
<feature type="compositionally biased region" description="Basic and acidic residues" evidence="6">
    <location>
        <begin position="48"/>
        <end position="62"/>
    </location>
</feature>
<feature type="compositionally biased region" description="Polar residues" evidence="6">
    <location>
        <begin position="84"/>
        <end position="106"/>
    </location>
</feature>
<feature type="compositionally biased region" description="Basic residues" evidence="6">
    <location>
        <begin position="130"/>
        <end position="153"/>
    </location>
</feature>
<feature type="compositionally biased region" description="Polar residues" evidence="6">
    <location>
        <begin position="156"/>
        <end position="175"/>
    </location>
</feature>
<feature type="compositionally biased region" description="Polar residues" evidence="6">
    <location>
        <begin position="325"/>
        <end position="336"/>
    </location>
</feature>
<feature type="compositionally biased region" description="Basic and acidic residues" evidence="6">
    <location>
        <begin position="479"/>
        <end position="637"/>
    </location>
</feature>
<feature type="compositionally biased region" description="Basic and acidic residues" evidence="6">
    <location>
        <begin position="644"/>
        <end position="663"/>
    </location>
</feature>
<feature type="compositionally biased region" description="Basic and acidic residues" evidence="6">
    <location>
        <begin position="670"/>
        <end position="730"/>
    </location>
</feature>
<feature type="compositionally biased region" description="Acidic residues" evidence="6">
    <location>
        <begin position="740"/>
        <end position="756"/>
    </location>
</feature>
<feature type="compositionally biased region" description="Polar residues" evidence="6">
    <location>
        <begin position="861"/>
        <end position="884"/>
    </location>
</feature>
<feature type="compositionally biased region" description="Polar residues" evidence="6">
    <location>
        <begin position="1151"/>
        <end position="1161"/>
    </location>
</feature>
<feature type="compositionally biased region" description="Basic and acidic residues" evidence="6">
    <location>
        <begin position="1188"/>
        <end position="1197"/>
    </location>
</feature>
<feature type="compositionally biased region" description="Basic and acidic residues" evidence="6">
    <location>
        <begin position="1230"/>
        <end position="1242"/>
    </location>
</feature>
<feature type="compositionally biased region" description="Polar residues" evidence="6">
    <location>
        <begin position="1337"/>
        <end position="1351"/>
    </location>
</feature>
<feature type="compositionally biased region" description="Basic and acidic residues" evidence="6">
    <location>
        <begin position="1441"/>
        <end position="1460"/>
    </location>
</feature>
<feature type="compositionally biased region" description="Basic and acidic residues" evidence="6">
    <location>
        <begin position="1476"/>
        <end position="1486"/>
    </location>
</feature>
<feature type="compositionally biased region" description="Polar residues" evidence="6">
    <location>
        <begin position="1522"/>
        <end position="1540"/>
    </location>
</feature>
<feature type="compositionally biased region" description="Basic and acidic residues" evidence="6">
    <location>
        <begin position="1620"/>
        <end position="1631"/>
    </location>
</feature>
<feature type="compositionally biased region" description="Basic and acidic residues" evidence="6">
    <location>
        <begin position="1697"/>
        <end position="1706"/>
    </location>
</feature>
<feature type="compositionally biased region" description="Basic and acidic residues" evidence="6">
    <location>
        <begin position="1726"/>
        <end position="1742"/>
    </location>
</feature>
<feature type="compositionally biased region" description="Basic and acidic residues" evidence="6">
    <location>
        <begin position="1760"/>
        <end position="1770"/>
    </location>
</feature>
<feature type="compositionally biased region" description="Basic and acidic residues" evidence="6">
    <location>
        <begin position="1786"/>
        <end position="1803"/>
    </location>
</feature>
<feature type="compositionally biased region" description="Basic and acidic residues" evidence="6">
    <location>
        <begin position="1836"/>
        <end position="1850"/>
    </location>
</feature>
<feature type="compositionally biased region" description="Polar residues" evidence="6">
    <location>
        <begin position="1854"/>
        <end position="1863"/>
    </location>
</feature>
<feature type="compositionally biased region" description="Basic and acidic residues" evidence="6">
    <location>
        <begin position="1874"/>
        <end position="1885"/>
    </location>
</feature>
<feature type="compositionally biased region" description="Basic and acidic residues" evidence="6">
    <location>
        <begin position="1896"/>
        <end position="1916"/>
    </location>
</feature>
<feature type="compositionally biased region" description="Basic and acidic residues" evidence="6">
    <location>
        <begin position="1992"/>
        <end position="2001"/>
    </location>
</feature>
<feature type="compositionally biased region" description="Basic and acidic residues" evidence="6">
    <location>
        <begin position="2153"/>
        <end position="2165"/>
    </location>
</feature>
<feature type="compositionally biased region" description="Polar residues" evidence="6">
    <location>
        <begin position="2181"/>
        <end position="2190"/>
    </location>
</feature>
<feature type="compositionally biased region" description="Basic and acidic residues" evidence="6">
    <location>
        <begin position="2212"/>
        <end position="2244"/>
    </location>
</feature>
<feature type="compositionally biased region" description="Basic and acidic residues" evidence="6">
    <location>
        <begin position="2279"/>
        <end position="2299"/>
    </location>
</feature>
<feature type="compositionally biased region" description="Basic and acidic residues" evidence="6">
    <location>
        <begin position="2306"/>
        <end position="2318"/>
    </location>
</feature>
<feature type="compositionally biased region" description="Basic and acidic residues" evidence="6">
    <location>
        <begin position="2377"/>
        <end position="2419"/>
    </location>
</feature>
<feature type="compositionally biased region" description="Basic and acidic residues" evidence="6">
    <location>
        <begin position="2429"/>
        <end position="2448"/>
    </location>
</feature>
<feature type="compositionally biased region" description="Basic and acidic residues" evidence="6">
    <location>
        <begin position="2513"/>
        <end position="2523"/>
    </location>
</feature>
<feature type="compositionally biased region" description="Basic and acidic residues" evidence="6">
    <location>
        <begin position="2682"/>
        <end position="2709"/>
    </location>
</feature>
<feature type="compositionally biased region" description="Polar residues" evidence="6">
    <location>
        <begin position="2762"/>
        <end position="2773"/>
    </location>
</feature>
<feature type="compositionally biased region" description="Basic and acidic residues" evidence="6">
    <location>
        <begin position="2791"/>
        <end position="2804"/>
    </location>
</feature>
<feature type="compositionally biased region" description="Basic and acidic residues" evidence="6">
    <location>
        <begin position="2812"/>
        <end position="2828"/>
    </location>
</feature>
<feature type="compositionally biased region" description="Basic and acidic residues" evidence="6">
    <location>
        <begin position="2918"/>
        <end position="2929"/>
    </location>
</feature>
<feature type="compositionally biased region" description="Polar residues" evidence="6">
    <location>
        <begin position="3030"/>
        <end position="3047"/>
    </location>
</feature>
<feature type="compositionally biased region" description="Basic and acidic residues" evidence="6">
    <location>
        <begin position="3153"/>
        <end position="3162"/>
    </location>
</feature>
<feature type="modified residue" description="Phosphoserine" evidence="17">
    <location>
        <position position="155"/>
    </location>
</feature>
<feature type="modified residue" description="Phosphoserine" evidence="17">
    <location>
        <position position="850"/>
    </location>
</feature>
<feature type="modified residue" description="Phosphoserine" evidence="17">
    <location>
        <position position="2192"/>
    </location>
</feature>
<feature type="modified residue" description="Phosphoserine" evidence="17">
    <location>
        <position position="2411"/>
    </location>
</feature>
<feature type="modified residue" description="Phosphoserine" evidence="17">
    <location>
        <position position="2495"/>
    </location>
</feature>
<feature type="modified residue" description="Phosphoserine" evidence="17">
    <location>
        <position position="2905"/>
    </location>
</feature>
<feature type="mutagenesis site" description="Complete loss of PRKAR2A-binding." evidence="9">
    <original>L</original>
    <variation>P</variation>
    <location>
        <position position="3197"/>
    </location>
</feature>
<feature type="mutagenesis site" description="Complete loss of PRKAR2A-binding." evidence="9">
    <original>L</original>
    <variation>P</variation>
    <location>
        <position position="3309"/>
    </location>
</feature>
<feature type="mutagenesis site" description="Important loss of PRKAR2A-binding." evidence="9">
    <original>C</original>
    <variation>P</variation>
    <location>
        <position position="3437"/>
    </location>
</feature>
<feature type="sequence conflict" description="In Ref. 3; BAB26762." evidence="16" ref="3">
    <original>S</original>
    <variation>R</variation>
    <location>
        <position position="81"/>
    </location>
</feature>
<feature type="sequence conflict" description="In Ref. 1; CAE02649." evidence="16" ref="1">
    <original>L</original>
    <variation>F</variation>
    <location>
        <position position="286"/>
    </location>
</feature>
<feature type="sequence conflict" description="In Ref. 1; CAE02649." evidence="16" ref="1">
    <original>A</original>
    <variation>T</variation>
    <location>
        <position position="305"/>
    </location>
</feature>
<feature type="sequence conflict" description="In Ref. 1; CAE02649." evidence="16" ref="1">
    <original>N</original>
    <variation>Y</variation>
    <location>
        <position position="328"/>
    </location>
</feature>
<feature type="sequence conflict" description="In Ref. 1; CAE02649." evidence="16" ref="1">
    <original>I</original>
    <variation>T</variation>
    <location>
        <position position="378"/>
    </location>
</feature>
<feature type="sequence conflict" description="In Ref. 1; CAE02649." evidence="16" ref="1">
    <original>H</original>
    <variation>Y</variation>
    <location>
        <position position="481"/>
    </location>
</feature>
<feature type="sequence conflict" description="In Ref. 1; CAE02649." evidence="16" ref="1">
    <original>H</original>
    <variation>Q</variation>
    <location>
        <position position="505"/>
    </location>
</feature>
<feature type="sequence conflict" description="In Ref. 2; CAD53474." evidence="16" ref="2">
    <location>
        <begin position="515"/>
        <end position="516"/>
    </location>
</feature>
<feature type="sequence conflict" description="In Ref. 1; CAE02649." evidence="16" ref="1">
    <original>S</original>
    <variation>P</variation>
    <location>
        <position position="528"/>
    </location>
</feature>
<feature type="sequence conflict" description="In Ref. 2; CAD53474." evidence="16" ref="2">
    <original>PVPIVH</original>
    <variation>SIVQ</variation>
    <location>
        <begin position="540"/>
        <end position="545"/>
    </location>
</feature>
<feature type="sequence conflict" description="In Ref. 1; CAE02649." evidence="16" ref="1">
    <original>A</original>
    <variation>V</variation>
    <location>
        <position position="551"/>
    </location>
</feature>
<feature type="sequence conflict" description="In Ref. 1; CAE02649." evidence="16" ref="1">
    <original>E</original>
    <variation>G</variation>
    <location>
        <position position="561"/>
    </location>
</feature>
<feature type="sequence conflict" description="In Ref. 2; CAD53474." evidence="16" ref="2">
    <original>EPIVHRDKGHALEPIVHREEEHAPEPIVHRDEGHAPE</original>
    <variation>GPV</variation>
    <location>
        <begin position="567"/>
        <end position="603"/>
    </location>
</feature>
<feature type="sequence conflict" description="In Ref. 2; CAD53474." evidence="16" ref="2">
    <original>P</original>
    <variation>L</variation>
    <location>
        <position position="616"/>
    </location>
</feature>
<feature type="sequence conflict" description="In Ref. 2; CAD53474." evidence="16" ref="2">
    <original>RK</original>
    <variation>HR</variation>
    <location>
        <begin position="621"/>
        <end position="622"/>
    </location>
</feature>
<feature type="sequence conflict" description="In Ref. 2; CAD53474." evidence="16" ref="2">
    <original>EEEQV</original>
    <variation>DEGHA</variation>
    <location>
        <begin position="635"/>
        <end position="639"/>
    </location>
</feature>
<feature type="sequence conflict" description="In Ref. 2; CAD53474." evidence="16" ref="2">
    <location>
        <begin position="643"/>
        <end position="644"/>
    </location>
</feature>
<feature type="sequence conflict" description="In Ref. 2; CAD53474." evidence="16" ref="2">
    <original>A</original>
    <variation>V</variation>
    <location>
        <position position="653"/>
    </location>
</feature>
<feature type="sequence conflict" description="In Ref. 2; CAD53474." evidence="16" ref="2">
    <original>EEEQV</original>
    <variation>DEGHA</variation>
    <location>
        <begin position="661"/>
        <end position="665"/>
    </location>
</feature>
<feature type="sequence conflict" description="In Ref. 2; CAD53474." evidence="16" ref="2">
    <location>
        <begin position="669"/>
        <end position="670"/>
    </location>
</feature>
<feature type="sequence conflict" description="In Ref. 2; CAD53474." evidence="16" ref="2">
    <original>A</original>
    <variation>V</variation>
    <location>
        <position position="679"/>
    </location>
</feature>
<feature type="sequence conflict" description="In Ref. 2; CAD53474." evidence="16" ref="2">
    <original>MVLREEHAPEPIVRREEEHAPEP</original>
    <variation>ES</variation>
    <location>
        <begin position="683"/>
        <end position="705"/>
    </location>
</feature>
<feature type="sequence conflict" description="In Ref. 2; CAD53474." evidence="16" ref="2">
    <original>H</original>
    <variation>L</variation>
    <location>
        <position position="720"/>
    </location>
</feature>
<feature type="sequence conflict" description="In Ref. 2; CAD53474." evidence="16" ref="2">
    <location>
        <position position="725"/>
    </location>
</feature>
<feature type="sequence conflict" description="In Ref. 2; CAD53474." evidence="16" ref="2">
    <original>I</original>
    <variation>T</variation>
    <location>
        <position position="739"/>
    </location>
</feature>
<feature type="sequence conflict" description="In Ref. 2; CAD53474." evidence="16" ref="2">
    <original>N</original>
    <variation>S</variation>
    <location>
        <position position="902"/>
    </location>
</feature>
<feature type="sequence conflict" description="In Ref. 2; CAD53474." evidence="16" ref="2">
    <original>S</original>
    <variation>SP</variation>
    <location>
        <position position="1094"/>
    </location>
</feature>
<feature type="sequence conflict" description="In Ref. 2; CAD53474." evidence="16" ref="2">
    <original>E</original>
    <variation>D</variation>
    <location>
        <position position="1163"/>
    </location>
</feature>
<feature type="sequence conflict" description="In Ref. 2; CAD53474." evidence="16" ref="2">
    <original>T</original>
    <variation>R</variation>
    <location>
        <position position="1203"/>
    </location>
</feature>
<feature type="sequence conflict" description="In Ref. 2; CAD53474." evidence="16" ref="2">
    <original>L</original>
    <variation>P</variation>
    <location>
        <position position="1227"/>
    </location>
</feature>
<feature type="sequence conflict" description="In Ref. 2; CAD53474." evidence="16" ref="2">
    <original>P</original>
    <variation>L</variation>
    <location>
        <position position="1254"/>
    </location>
</feature>
<feature type="sequence conflict" description="In Ref. 2; CAD53474." evidence="16" ref="2">
    <original>RQA</original>
    <variation>QQE</variation>
    <location>
        <begin position="1284"/>
        <end position="1286"/>
    </location>
</feature>
<feature type="sequence conflict" description="In Ref. 2; CAD53474." evidence="16" ref="2">
    <original>V</original>
    <variation>A</variation>
    <location>
        <position position="1505"/>
    </location>
</feature>
<feature type="sequence conflict" description="In Ref. 2; CAD53474." evidence="16" ref="2">
    <original>T</original>
    <variation>M</variation>
    <location>
        <position position="1513"/>
    </location>
</feature>
<feature type="sequence conflict" description="In Ref. 2; CAD53474." evidence="16" ref="2">
    <original>T</original>
    <variation>M</variation>
    <location>
        <position position="1516"/>
    </location>
</feature>
<feature type="sequence conflict" description="In Ref. 2; CAD53474." evidence="16" ref="2">
    <original>I</original>
    <variation>V</variation>
    <location>
        <position position="1564"/>
    </location>
</feature>
<feature type="sequence conflict" description="In Ref. 2; CAD53474." evidence="16" ref="2">
    <original>A</original>
    <variation>T</variation>
    <location>
        <position position="1580"/>
    </location>
</feature>
<feature type="sequence conflict" description="In Ref. 2; CAD53474." evidence="16" ref="2">
    <original>L</original>
    <variation>V</variation>
    <location>
        <position position="1635"/>
    </location>
</feature>
<feature type="sequence conflict" description="In Ref. 2; CAD53474." evidence="16" ref="2">
    <original>F</original>
    <variation>L</variation>
    <location>
        <position position="1647"/>
    </location>
</feature>
<feature type="sequence conflict" description="In Ref. 2; CAD53474." evidence="16" ref="2">
    <original>I</original>
    <variation>T</variation>
    <location>
        <position position="1832"/>
    </location>
</feature>
<feature type="sequence conflict" description="In Ref. 2; CAD53474." evidence="16" ref="2">
    <original>S</original>
    <variation>P</variation>
    <location>
        <position position="1872"/>
    </location>
</feature>
<feature type="sequence conflict" description="In Ref. 2; CAD53474." evidence="16" ref="2">
    <original>P</original>
    <variation>S</variation>
    <location>
        <position position="2145"/>
    </location>
</feature>
<feature type="sequence conflict" description="In Ref. 2; CAD53474." evidence="16" ref="2">
    <original>P</original>
    <variation>S</variation>
    <location>
        <position position="2453"/>
    </location>
</feature>
<feature type="sequence conflict" description="In Ref. 2; CAD53474." evidence="16" ref="2">
    <original>A</original>
    <variation>V</variation>
    <location>
        <position position="2477"/>
    </location>
</feature>
<feature type="sequence conflict" description="In Ref. 2; CAD53474." evidence="16" ref="2">
    <original>A</original>
    <variation>T</variation>
    <location>
        <position position="2511"/>
    </location>
</feature>
<feature type="sequence conflict" description="In Ref. 2; CAD53474." evidence="16" ref="2">
    <original>D</original>
    <variation>Y</variation>
    <location>
        <position position="2533"/>
    </location>
</feature>
<feature type="sequence conflict" description="In Ref. 2; CAD53474." evidence="16" ref="2">
    <original>A</original>
    <variation>T</variation>
    <location>
        <position position="2569"/>
    </location>
</feature>
<feature type="sequence conflict" description="In Ref. 2; CAD53474." evidence="16" ref="2">
    <original>K</original>
    <variation>E</variation>
    <location>
        <position position="2698"/>
    </location>
</feature>
<feature type="sequence conflict" description="In Ref. 2; CAD53474." evidence="16" ref="2">
    <original>C</original>
    <variation>G</variation>
    <location>
        <position position="2879"/>
    </location>
</feature>
<feature type="sequence conflict" description="In Ref. 2; CAD53474." evidence="16" ref="2">
    <original>S</original>
    <variation>T</variation>
    <location>
        <position position="2929"/>
    </location>
</feature>
<feature type="sequence conflict" description="In Ref. 2; CAD53474." evidence="16" ref="2">
    <original>EAE</original>
    <variation>GAK</variation>
    <location>
        <begin position="3315"/>
        <end position="3317"/>
    </location>
</feature>
<feature type="sequence conflict" description="In Ref. 2; CAD53474." evidence="16" ref="2">
    <original>P</original>
    <variation>A</variation>
    <location>
        <position position="3477"/>
    </location>
</feature>
<feature type="sequence conflict" description="In Ref. 3; BAB26761." evidence="16" ref="3">
    <original>R</original>
    <variation>G</variation>
    <location>
        <position position="3496"/>
    </location>
</feature>
<feature type="sequence conflict" description="In Ref. 2; CAD53474 and 3; BAB26761." evidence="16" ref="2 3">
    <original>H</original>
    <variation>L</variation>
    <location>
        <position position="3530"/>
    </location>
</feature>
<keyword id="KW-0175">Coiled coil</keyword>
<keyword id="KW-0963">Cytoplasm</keyword>
<keyword id="KW-0539">Nucleus</keyword>
<keyword id="KW-0597">Phosphoprotein</keyword>
<keyword id="KW-1185">Reference proteome</keyword>
<keyword id="KW-0677">Repeat</keyword>
<keyword id="KW-0703">Sarcoplasmic reticulum</keyword>
<evidence type="ECO:0000250" key="1"/>
<evidence type="ECO:0000250" key="2">
    <source>
        <dbReference type="UniProtKB" id="A0A286XF80"/>
    </source>
</evidence>
<evidence type="ECO:0000255" key="3"/>
<evidence type="ECO:0000255" key="4">
    <source>
        <dbReference type="PROSITE-ProRule" id="PRU00316"/>
    </source>
</evidence>
<evidence type="ECO:0000255" key="5">
    <source>
        <dbReference type="PROSITE-ProRule" id="PRU00548"/>
    </source>
</evidence>
<evidence type="ECO:0000256" key="6">
    <source>
        <dbReference type="SAM" id="MobiDB-lite"/>
    </source>
</evidence>
<evidence type="ECO:0000269" key="7">
    <source>
    </source>
</evidence>
<evidence type="ECO:0000269" key="8">
    <source>
    </source>
</evidence>
<evidence type="ECO:0000269" key="9">
    <source>
    </source>
</evidence>
<evidence type="ECO:0000269" key="10">
    <source>
    </source>
</evidence>
<evidence type="ECO:0000269" key="11">
    <source>
    </source>
</evidence>
<evidence type="ECO:0000269" key="12">
    <source>
    </source>
</evidence>
<evidence type="ECO:0000269" key="13">
    <source ref="4"/>
</evidence>
<evidence type="ECO:0000303" key="14">
    <source>
    </source>
</evidence>
<evidence type="ECO:0000303" key="15">
    <source>
    </source>
</evidence>
<evidence type="ECO:0000305" key="16"/>
<evidence type="ECO:0007744" key="17">
    <source>
    </source>
</evidence>
<protein>
    <recommendedName>
        <fullName>Cardiomyopathy-associated protein 5</fullName>
    </recommendedName>
    <alternativeName>
        <fullName>Heart and skeletal muscle-specific and sprouty domain-containing</fullName>
    </alternativeName>
    <alternativeName>
        <fullName evidence="14 15">Myospryn</fullName>
    </alternativeName>
    <alternativeName>
        <fullName>Stretch-response protein 553</fullName>
    </alternativeName>
    <alternativeName>
        <fullName>Stretch-responsive fibronectin protein type 3</fullName>
    </alternativeName>
    <alternativeName>
        <fullName>TRIM-like protein</fullName>
    </alternativeName>
</protein>
<organism>
    <name type="scientific">Mus musculus</name>
    <name type="common">Mouse</name>
    <dbReference type="NCBI Taxonomy" id="10090"/>
    <lineage>
        <taxon>Eukaryota</taxon>
        <taxon>Metazoa</taxon>
        <taxon>Chordata</taxon>
        <taxon>Craniata</taxon>
        <taxon>Vertebrata</taxon>
        <taxon>Euteleostomi</taxon>
        <taxon>Mammalia</taxon>
        <taxon>Eutheria</taxon>
        <taxon>Euarchontoglires</taxon>
        <taxon>Glires</taxon>
        <taxon>Rodentia</taxon>
        <taxon>Myomorpha</taxon>
        <taxon>Muroidea</taxon>
        <taxon>Muridae</taxon>
        <taxon>Murinae</taxon>
        <taxon>Mus</taxon>
        <taxon>Mus</taxon>
    </lineage>
</organism>
<gene>
    <name type="primary">Cmya5</name>
    <name type="synonym">Sr553</name>
    <name type="synonym">Srfsd</name>
    <name type="synonym">Tims</name>
</gene>
<dbReference type="EMBL" id="AJ575748">
    <property type="protein sequence ID" value="CAE02649.1"/>
    <property type="molecule type" value="mRNA"/>
</dbReference>
<dbReference type="EMBL" id="AJ511265">
    <property type="protein sequence ID" value="CAD53474.1"/>
    <property type="molecule type" value="mRNA"/>
</dbReference>
<dbReference type="EMBL" id="AK010194">
    <property type="protein sequence ID" value="BAB26761.1"/>
    <property type="molecule type" value="mRNA"/>
</dbReference>
<dbReference type="EMBL" id="AK010195">
    <property type="protein sequence ID" value="BAB26762.1"/>
    <property type="molecule type" value="mRNA"/>
</dbReference>
<dbReference type="EMBL" id="AJ245954">
    <property type="protein sequence ID" value="CAC08494.1"/>
    <property type="molecule type" value="mRNA"/>
</dbReference>
<dbReference type="EMBL" id="AJ250188">
    <property type="protein sequence ID" value="CAC08495.1"/>
    <property type="molecule type" value="mRNA"/>
</dbReference>
<dbReference type="SMR" id="Q70KF4"/>
<dbReference type="FunCoup" id="Q70KF4">
    <property type="interactions" value="650"/>
</dbReference>
<dbReference type="IntAct" id="Q70KF4">
    <property type="interactions" value="2"/>
</dbReference>
<dbReference type="STRING" id="10090.ENSMUSP00000050408"/>
<dbReference type="GlyGen" id="Q70KF4">
    <property type="glycosylation" value="5 sites, 1 O-linked glycan (2 sites)"/>
</dbReference>
<dbReference type="iPTMnet" id="Q70KF4"/>
<dbReference type="PhosphoSitePlus" id="Q70KF4"/>
<dbReference type="jPOST" id="Q70KF4"/>
<dbReference type="PaxDb" id="10090-ENSMUSP00000050408"/>
<dbReference type="ProteomicsDB" id="283644"/>
<dbReference type="Pumba" id="Q70KF4"/>
<dbReference type="AGR" id="MGI:1923719"/>
<dbReference type="MGI" id="MGI:1923719">
    <property type="gene designation" value="Cmya5"/>
</dbReference>
<dbReference type="eggNOG" id="KOG2177">
    <property type="taxonomic scope" value="Eukaryota"/>
</dbReference>
<dbReference type="InParanoid" id="Q70KF4"/>
<dbReference type="PhylomeDB" id="Q70KF4"/>
<dbReference type="ChiTaRS" id="Cmya5">
    <property type="organism name" value="mouse"/>
</dbReference>
<dbReference type="PRO" id="PR:Q70KF4"/>
<dbReference type="Proteomes" id="UP000000589">
    <property type="component" value="Unplaced"/>
</dbReference>
<dbReference type="RNAct" id="Q70KF4">
    <property type="molecule type" value="protein"/>
</dbReference>
<dbReference type="GO" id="GO:0043034">
    <property type="term" value="C:costamere"/>
    <property type="evidence" value="ECO:0000314"/>
    <property type="project" value="MGI"/>
</dbReference>
<dbReference type="GO" id="GO:0031430">
    <property type="term" value="C:M band"/>
    <property type="evidence" value="ECO:0007669"/>
    <property type="project" value="UniProtKB-SubCell"/>
</dbReference>
<dbReference type="GO" id="GO:0005634">
    <property type="term" value="C:nucleus"/>
    <property type="evidence" value="ECO:0000250"/>
    <property type="project" value="UniProtKB"/>
</dbReference>
<dbReference type="GO" id="GO:0048471">
    <property type="term" value="C:perinuclear region of cytoplasm"/>
    <property type="evidence" value="ECO:0000250"/>
    <property type="project" value="UniProtKB"/>
</dbReference>
<dbReference type="GO" id="GO:0016529">
    <property type="term" value="C:sarcoplasmic reticulum"/>
    <property type="evidence" value="ECO:0000250"/>
    <property type="project" value="UniProtKB"/>
</dbReference>
<dbReference type="GO" id="GO:0042802">
    <property type="term" value="F:identical protein binding"/>
    <property type="evidence" value="ECO:0000353"/>
    <property type="project" value="MGI"/>
</dbReference>
<dbReference type="GO" id="GO:0004864">
    <property type="term" value="F:protein phosphatase inhibitor activity"/>
    <property type="evidence" value="ECO:0000314"/>
    <property type="project" value="MGI"/>
</dbReference>
<dbReference type="GO" id="GO:0070885">
    <property type="term" value="P:negative regulation of calcineurin-NFAT signaling cascade"/>
    <property type="evidence" value="ECO:0000316"/>
    <property type="project" value="MGI"/>
</dbReference>
<dbReference type="GO" id="GO:0014733">
    <property type="term" value="P:regulation of skeletal muscle adaptation"/>
    <property type="evidence" value="ECO:0000316"/>
    <property type="project" value="MGI"/>
</dbReference>
<dbReference type="CDD" id="cd00063">
    <property type="entry name" value="FN3"/>
    <property type="match status" value="2"/>
</dbReference>
<dbReference type="FunFam" id="2.60.40.10:FF:000985">
    <property type="entry name" value="Cardiomyopathy associated 5"/>
    <property type="match status" value="1"/>
</dbReference>
<dbReference type="FunFam" id="2.60.120.920:FF:000038">
    <property type="entry name" value="cardiomyopathy-associated protein 5"/>
    <property type="match status" value="1"/>
</dbReference>
<dbReference type="Gene3D" id="2.60.120.920">
    <property type="match status" value="1"/>
</dbReference>
<dbReference type="Gene3D" id="2.60.40.10">
    <property type="entry name" value="Immunoglobulins"/>
    <property type="match status" value="2"/>
</dbReference>
<dbReference type="InterPro" id="IPR001870">
    <property type="entry name" value="B30.2/SPRY"/>
</dbReference>
<dbReference type="InterPro" id="IPR043136">
    <property type="entry name" value="B30.2/SPRY_sf"/>
</dbReference>
<dbReference type="InterPro" id="IPR013320">
    <property type="entry name" value="ConA-like_dom_sf"/>
</dbReference>
<dbReference type="InterPro" id="IPR050617">
    <property type="entry name" value="E3_ligase_FN3/SPRY"/>
</dbReference>
<dbReference type="InterPro" id="IPR003961">
    <property type="entry name" value="FN3_dom"/>
</dbReference>
<dbReference type="InterPro" id="IPR036116">
    <property type="entry name" value="FN3_sf"/>
</dbReference>
<dbReference type="InterPro" id="IPR013783">
    <property type="entry name" value="Ig-like_fold"/>
</dbReference>
<dbReference type="InterPro" id="IPR003877">
    <property type="entry name" value="SPRY_dom"/>
</dbReference>
<dbReference type="PANTHER" id="PTHR24099:SF7">
    <property type="entry name" value="CARDIOMYOPATHY-ASSOCIATED PROTEIN 5"/>
    <property type="match status" value="1"/>
</dbReference>
<dbReference type="PANTHER" id="PTHR24099">
    <property type="entry name" value="E3 UBIQUITIN-PROTEIN LIGASE TRIM36-RELATED"/>
    <property type="match status" value="1"/>
</dbReference>
<dbReference type="Pfam" id="PF00622">
    <property type="entry name" value="SPRY"/>
    <property type="match status" value="1"/>
</dbReference>
<dbReference type="SMART" id="SM00060">
    <property type="entry name" value="FN3"/>
    <property type="match status" value="2"/>
</dbReference>
<dbReference type="SUPFAM" id="SSF49899">
    <property type="entry name" value="Concanavalin A-like lectins/glucanases"/>
    <property type="match status" value="1"/>
</dbReference>
<dbReference type="SUPFAM" id="SSF49265">
    <property type="entry name" value="Fibronectin type III"/>
    <property type="match status" value="1"/>
</dbReference>
<dbReference type="PROSITE" id="PS50188">
    <property type="entry name" value="B302_SPRY"/>
    <property type="match status" value="1"/>
</dbReference>
<dbReference type="PROSITE" id="PS50853">
    <property type="entry name" value="FN3"/>
    <property type="match status" value="2"/>
</dbReference>
<proteinExistence type="evidence at protein level"/>
<comment type="function">
    <text evidence="9 10 11 12">May serve as an anchoring protein that mediates the subcellular compartmentation of protein kinase A (PKA) via binding to PRKAR2A. May attenuate calcineurin ability to induce slow-fiber gene program in muscle and may negatively modulate skeletal muscle regeneration. Plays a role in the assembly of ryanodine receptor (RYR2) clusters in striated muscle.</text>
</comment>
<comment type="subunit">
    <text evidence="1 12">Interacts with PRKAR2A. Interacts with ACTN2, DES and DTNBP1/dysbindin. Interacts with DMD/dystrophin. Interacts with the calcineurin catalytic subunit PPP3CA. Interacts with TTN (By similarity). Interacts with CAPN3; this interaction, which results in CMYA5 proteolysis, may protect CAPN3 from autolysis (By similarity). Interacts with FSD2 (PubMed:28740084). In cardiac muscles, identified in a complex composed of FSD2, CMYA5 and RYR2 (PubMed:28740084).</text>
</comment>
<comment type="interaction">
    <interactant intactId="EBI-782290">
        <id>Q70KF4</id>
    </interactant>
    <interactant intactId="EBI-643186">
        <id>Q91WZ8</id>
        <label>Dtnbp1</label>
    </interactant>
    <organismsDiffer>false</organismsDiffer>
    <experiments>5</experiments>
</comment>
<comment type="subcellular location">
    <subcellularLocation>
        <location evidence="2">Nucleus</location>
    </subcellularLocation>
    <subcellularLocation>
        <location>Cytoplasm</location>
    </subcellularLocation>
    <subcellularLocation>
        <location evidence="2">Cytoplasm</location>
        <location evidence="2">Perinuclear region</location>
    </subcellularLocation>
    <subcellularLocation>
        <location>Cytoplasm</location>
        <location>Myofibril</location>
        <location>Sarcomere</location>
        <location>M line</location>
    </subcellularLocation>
    <subcellularLocation>
        <location evidence="2">Sarcoplasmic reticulum</location>
    </subcellularLocation>
    <text evidence="2">Found predominantly at the periphery of the nucleus but also throughout the cell. Localized in lysosomes. In skeletal muscles, localizes along myofiber periphery, at costameres. Predominantly flanks Z-disks (By similarity). Occasionally present at the M-band level. In the mdx mouse model for Duchenne muscular dystrophy, exhibits a discontinuous localization at the myofiber periphery with extensive regions devoid of CMYA5. This highly irregular pattern is associated with an increased cytoplasmic localization, particularly in discrete foci within myofibers. Colocalized with RYR2 in the sarcoplasmic reticulum (By similarity).</text>
</comment>
<comment type="tissue specificity">
    <text evidence="7 8 10 12">Expressed in skin as well as in cardiac muscle. Expressed in skeletal muscle (at protein level).</text>
</comment>
<comment type="developmental stage">
    <text evidence="8">At 10.5 dpc, strong expression is observed in the atria and ventricles of the heart. The signal is localized predominantly to the trabecular zone but not the compact zone of the ventricles. Weaker expression is detected in the developing somites at this time point. At 12.5 dpc the intense hybridization signal is maintained in the heart with stronger expression in the atria compared with the ventricles. At 15.5 dpc, continues to be expressed in the heart with lower levels in the atria compared with the ventricles. In contrast, skeletal muscle displays high levels of transcripts. A sagittal section of an isolated heart from an 17.5 dpc mouse embryo shows abundant expression in myocardial cells with a more robust signal in the trabecular region. Expression in the cardiac valves is completely absent at this time point.</text>
</comment>
<comment type="induction">
    <text evidence="10 13">Up-regulated in response to mechanical stretch of skeletal muscle (hypertrophy mechanically-induced). May be up-regulated by the PKA-CREB signaling pathway.</text>
</comment>
<comment type="domain">
    <text>Amphipathic helix regions act as an anchoring domain for PKA, and appear to be responsible of the interaction between myospryn and PRKAR2A.</text>
</comment>
<comment type="PTM">
    <text evidence="9">Phosphorylated by PKA.</text>
</comment>
<sequence length="3739" mass="413040">MESGDSGLAAQGFLGWGADEEVAQELETEEESEGEGEETAAESEEEPDARLSDEDEEGKTKQECIVSDPSFSMVAVQREDSGITWETNSSRSSTPWASGESQTSGICSLEGSALTSPPGSVSFIMDEVKRTRKRTQKSKRGSPSLRRKGSKKRNSLESQDVLTNQEDGPSISESPVLNIENEKSSIGTYDKTRRKKTASNTPPITGAIYKEHKPLVLKPVYIGTVQYKIKMFNSVKEELIPLQFYGTLPKGYVIKEIHYRRGKDSSISLEPDLSNGGSNIVPQRKLAQSPEEDKVRELAPPWRGALSKGSRTSLFSHEEQKKTYADSNLNVPSSTEHAFPSSARNDTADQEENLSLPQMMPQQPADESKTHRMEPPSIPATMVLERAKEELEQNAQGKESSEDDASVLTGSADDVQQEGLVSVNHSMPWEAEKESLETGPPRPAPAIQEKFEPDMEGLEPISTEKTEQASEYVTSSEPIVHREEEHAPEPIVHREEEHAPEPIVHREEEHAPEPESIVHREEEHAPESIVHREEEHAPEPVPIVHREEEHAPEPESIVHREEEHAPEPIVHRDKGHALEPIVHREEEHAPEPIVHRDEGHAPEPIVHREEEHVPEPESIVRKGEEHAPEPIVHREEEQVPEPESIVHREEEHAPEPIVHREEEQVPEPESIVHREEEHAPEPMVLREEHAPEPIVRREEEHAPEPIVHREEEHAPEPMVHRKAQQLERGVETSTPITDITEPEDSSLEEEIIELDYPESPLASKETSPSPLSPEVEHRKEPILPTQMTFTPERITLSEEEREENESVSTDSAFVSEYSVLQDLNHTPEKLEVEAVSVSDVKSSNEPAVFSEDDEERESYSPAMTSVSEQSLSPSTTEKTSAIQSPLFSTVSPVLSGDEASENVCHSPESESAAEYSVPAHAQELLLKTGDHKLPLKSQRVSEPIIQAEDEKEDIGLLPPAALSQAVLSEDESLGSGSFASDSKLPFKPSVSQNATRESPQKTIDDMPQFKPRGLSDPATLLEEEKEAIGVGLSSSNEVSAVECALPPQTTELLSESHAPPPWAISSEQVVQSEEGSRDQQRGSFSSTPELGHTSLLLKGASSPTGLSEQGQEEDNIGPLSPDSAFASEFSFSPYPTQELEKRELGRDSPLCLTSPSEQTVLSEEDTEEADLFSPDSASQVSIPPYRIAETEQNKVEPDELLPTRSAPDYPYFSEADEEEAGSSVVTLVPEHSEPSQEREESSPCRPVFEDLSLPPSADKTGQAETMSDVPTISTSVSEYLILARQAKTQASLEPEAEDLVPPPTSGWEKRDAKSSLPAVTIAASSSALSSVVKEETTSVLPTSQPSVSPESTCVLKPEQEPTAPLTLTSADEQMALPRVGREKAVLDSQEATAHKSQDQTPEPRLPNVPGSGMKYSVLSDLGDEPKADVKLNLAPTVTSELEQRMLSKNEPEVAKPHSPPEETSISGPKVLSAVKTEVKQESKITRELPAASSGRERGAEHSPPVPPALPALTEETGKDTEASSSATTVPVTKLDSNSTKLGRDEVLTDPSLASPVEHPGLKGIGKSELGSGLPLPSMSASEVLRPEPKLPVNSGVEVEREDNEPPPLQVSPTSKPTVPNDKHEEITRSPDSENLVSDDLAPTLLAFRHEMNRQAEETSSPVPGSFLSGEQELIKLPPEPEKHKQLSEVPTAGSELIDSRDRDRSLGIEPVKPIGTEPGPSILEKGPAELQRRGKEQEENRKLPVPASAPLETASFDLPIEQKEPKRTLHEGQAVEVPDESSSSADKPELGVKQLAEKKENLEQPKPFVTTERASVTGSKVKESLISPKDNIWMLEKPDGLVNQHEDRKPGTGQLESSESTDLMSEKLGAASLDTDHTSETRNQETSKAPVSGEKLSQEPRRVQSKAVDDSEEGRKLASGNVEVLTQSKSVPAVKAKATPQPPETPEVTQKPSEKSLVTEQGLPAEKGKKGISSFKSWMSSLLFGSSIPDSKVSDNEDLETRPGPSVEKAVPAIEPKGTVPAEVNIAEKPAVHSLPEVTVKLAEEPKGVSVKSSISQDLKEKLTFLSNEDVLKQPKSNSENYGQKELPGFSEGMGESLATSVGDKHPGIHPCSPMGEKVGMEEAQNMAPLHITESQRRQKPEVSPPSMWNISARKEEPSSDHKETWLSSSDVVDRMPQKPKSAQSAFTRMNSEEPASMILPVESKGSLSDLGEDRLRQEMPKPTSLEHCEEEVERPTEEKDGWETRSFSLAGKRGLAEKQEIMAPLELRENEAVGELQRMPESRPFKLEESKAAERLEQRISPTEKLMEKPSKTLALDRREKEVQEWVFSEGEKQEYPPAAMPVPGASAVSLDKAQPHLLAKPTPVVEKPEHIVTEVYPEIRERKAAETQPHPQEEGKTLVEKTKVSRVESPHGEETDGHSLTQEGNLELEKSGESRVDLKEERRRFVMPELPLGASVAAEDGSVQPRPLSKDAARASDMTDETKHLGTPPTQPSAVEPQTLVLGTSVEHAVKKQETWSDRPTVHTFQTSKDDTEEMLKQSVLISKHHLEAVEDVHRNEPPSSAASNYAQFMLSASEISADGVPPMGGTAQEPEGTSVKDEEFSVTSKPAGLSEDQKSAFSIISEGCEILNIHAPAFIPSVDQEESEQMQDKLQYLEEKASFKSISVHDEKKAAASHKTQKSKLEVPDRKITSLKENKTKETHKTKEEIATDSGMGDFTPIQPTVSGEEDYFEKYTLIDYNLSPGSGKQKSTVEESSEEATKTLTSFPESSAEQALDHEYNLVKLDESFYGPEKDDSKLSHAEMQKSLAIQKPDDRNAPKGISRDVDSRSPGMPLFDVEEGVLSKRQIFPTTPKAVNPELLEEPPALSFFYKDLYEGACGEKNEGETASEGDSVDSETSFPRRHSDTDDGPGMYFEKYILKDDILHDESVTQEDQGQGLEEKPVGEEDSQQLRVAEREIRRKPETSFWEKNLEEQHKVVGREGEPTGHMETLDEAAMQQKAPITEQVRAVTQKMSYAVPFQDTRCVLESEPSSQGNEAGNASPDVNLNVPVQVSFPEEESAAGATYAPEVLQERLVPSVSREERLHNTPVQDEYDFVGSLNQEAASQAILPEEPGSESSPKEVLSQGSESFEHIREQELTSEGEPRMSASQEVWDRTEDQSARESVTAKTQKEPKKTQAESYCYTCKSLVSEMDKALDIHKDHEVSALDTAISAVKVQLGEFLENLQEKSLRIEAFVSEIESFFNTIEEKCSKNEKRLEMQNEEMMKRVLAQYDEKAQSFEEVKKKKMEFLHDQMVHFLQSMDTAKDTLETIVREAEELDETVFLASFEEINERLLSAMESTASLENMPAAFSLFEHYDDSSARSDQMLKQVAVPQPPRLEPQEPSSATSTTIAVYWSVNKEDVVDSFQVYCVEEPQDDQEINELVEEYRLTVKESCCIFEDLEPDRCYQVWVMAVNFTGCSLPSERAIFRTAPSTPVIHVEDCTVCWNTATVRWRPANPEATETYTLEYCRQHSPEGEGLRSFSGIKGHQLKVNLPPNDNYFFYVRATNASGTSEQSEAALISTRGTRFLLLRETAHPALQISANGTVISFSERRRLTEIPSVLGEELPACGQHYWETTVADSPAYRLGICTSSAVRAGALGQGETSWYMHCSEPQRYTFFYSGIVSEVHATERPARVGILLDYTNQRLLFINAESGQLLFIVRHRFNEGVHPAFALEKPGRCTLHLGLEPPDSVRHK</sequence>
<reference key="1">
    <citation type="journal article" date="2004" name="J. Biol. Chem.">
        <title>Myospryn is a novel binding partner for dysbindin in muscle.</title>
        <authorList>
            <person name="Benson M.A."/>
            <person name="Tinsley C.L."/>
            <person name="Blake D.J."/>
        </authorList>
    </citation>
    <scope>NUCLEOTIDE SEQUENCE [MRNA]</scope>
    <scope>INTERACTION WITH DTNBP1</scope>
    <scope>TISSUE SPECIFICITY</scope>
    <source>
        <strain>C57BL/6J</strain>
        <tissue>Skeletal muscle</tissue>
    </source>
</reference>
<reference key="2">
    <citation type="submission" date="2002-09" db="EMBL/GenBank/DDBJ databases">
        <title>Characterisation of a novel stretch-sensitive gene encoding a Bbox/FN-3/SPRY domain containing protein.</title>
        <authorList>
            <person name="McKoy G."/>
            <person name="Kemp T."/>
            <person name="Velineni R."/>
            <person name="Shaw A.L."/>
            <person name="Coulton G.R."/>
        </authorList>
    </citation>
    <scope>NUCLEOTIDE SEQUENCE [MRNA]</scope>
    <source>
        <strain>C57BL/10</strain>
        <tissue>Muscle</tissue>
    </source>
</reference>
<reference key="3">
    <citation type="journal article" date="2005" name="Science">
        <title>The transcriptional landscape of the mammalian genome.</title>
        <authorList>
            <person name="Carninci P."/>
            <person name="Kasukawa T."/>
            <person name="Katayama S."/>
            <person name="Gough J."/>
            <person name="Frith M.C."/>
            <person name="Maeda N."/>
            <person name="Oyama R."/>
            <person name="Ravasi T."/>
            <person name="Lenhard B."/>
            <person name="Wells C."/>
            <person name="Kodzius R."/>
            <person name="Shimokawa K."/>
            <person name="Bajic V.B."/>
            <person name="Brenner S.E."/>
            <person name="Batalov S."/>
            <person name="Forrest A.R."/>
            <person name="Zavolan M."/>
            <person name="Davis M.J."/>
            <person name="Wilming L.G."/>
            <person name="Aidinis V."/>
            <person name="Allen J.E."/>
            <person name="Ambesi-Impiombato A."/>
            <person name="Apweiler R."/>
            <person name="Aturaliya R.N."/>
            <person name="Bailey T.L."/>
            <person name="Bansal M."/>
            <person name="Baxter L."/>
            <person name="Beisel K.W."/>
            <person name="Bersano T."/>
            <person name="Bono H."/>
            <person name="Chalk A.M."/>
            <person name="Chiu K.P."/>
            <person name="Choudhary V."/>
            <person name="Christoffels A."/>
            <person name="Clutterbuck D.R."/>
            <person name="Crowe M.L."/>
            <person name="Dalla E."/>
            <person name="Dalrymple B.P."/>
            <person name="de Bono B."/>
            <person name="Della Gatta G."/>
            <person name="di Bernardo D."/>
            <person name="Down T."/>
            <person name="Engstrom P."/>
            <person name="Fagiolini M."/>
            <person name="Faulkner G."/>
            <person name="Fletcher C.F."/>
            <person name="Fukushima T."/>
            <person name="Furuno M."/>
            <person name="Futaki S."/>
            <person name="Gariboldi M."/>
            <person name="Georgii-Hemming P."/>
            <person name="Gingeras T.R."/>
            <person name="Gojobori T."/>
            <person name="Green R.E."/>
            <person name="Gustincich S."/>
            <person name="Harbers M."/>
            <person name="Hayashi Y."/>
            <person name="Hensch T.K."/>
            <person name="Hirokawa N."/>
            <person name="Hill D."/>
            <person name="Huminiecki L."/>
            <person name="Iacono M."/>
            <person name="Ikeo K."/>
            <person name="Iwama A."/>
            <person name="Ishikawa T."/>
            <person name="Jakt M."/>
            <person name="Kanapin A."/>
            <person name="Katoh M."/>
            <person name="Kawasawa Y."/>
            <person name="Kelso J."/>
            <person name="Kitamura H."/>
            <person name="Kitano H."/>
            <person name="Kollias G."/>
            <person name="Krishnan S.P."/>
            <person name="Kruger A."/>
            <person name="Kummerfeld S.K."/>
            <person name="Kurochkin I.V."/>
            <person name="Lareau L.F."/>
            <person name="Lazarevic D."/>
            <person name="Lipovich L."/>
            <person name="Liu J."/>
            <person name="Liuni S."/>
            <person name="McWilliam S."/>
            <person name="Madan Babu M."/>
            <person name="Madera M."/>
            <person name="Marchionni L."/>
            <person name="Matsuda H."/>
            <person name="Matsuzawa S."/>
            <person name="Miki H."/>
            <person name="Mignone F."/>
            <person name="Miyake S."/>
            <person name="Morris K."/>
            <person name="Mottagui-Tabar S."/>
            <person name="Mulder N."/>
            <person name="Nakano N."/>
            <person name="Nakauchi H."/>
            <person name="Ng P."/>
            <person name="Nilsson R."/>
            <person name="Nishiguchi S."/>
            <person name="Nishikawa S."/>
            <person name="Nori F."/>
            <person name="Ohara O."/>
            <person name="Okazaki Y."/>
            <person name="Orlando V."/>
            <person name="Pang K.C."/>
            <person name="Pavan W.J."/>
            <person name="Pavesi G."/>
            <person name="Pesole G."/>
            <person name="Petrovsky N."/>
            <person name="Piazza S."/>
            <person name="Reed J."/>
            <person name="Reid J.F."/>
            <person name="Ring B.Z."/>
            <person name="Ringwald M."/>
            <person name="Rost B."/>
            <person name="Ruan Y."/>
            <person name="Salzberg S.L."/>
            <person name="Sandelin A."/>
            <person name="Schneider C."/>
            <person name="Schoenbach C."/>
            <person name="Sekiguchi K."/>
            <person name="Semple C.A."/>
            <person name="Seno S."/>
            <person name="Sessa L."/>
            <person name="Sheng Y."/>
            <person name="Shibata Y."/>
            <person name="Shimada H."/>
            <person name="Shimada K."/>
            <person name="Silva D."/>
            <person name="Sinclair B."/>
            <person name="Sperling S."/>
            <person name="Stupka E."/>
            <person name="Sugiura K."/>
            <person name="Sultana R."/>
            <person name="Takenaka Y."/>
            <person name="Taki K."/>
            <person name="Tammoja K."/>
            <person name="Tan S.L."/>
            <person name="Tang S."/>
            <person name="Taylor M.S."/>
            <person name="Tegner J."/>
            <person name="Teichmann S.A."/>
            <person name="Ueda H.R."/>
            <person name="van Nimwegen E."/>
            <person name="Verardo R."/>
            <person name="Wei C.L."/>
            <person name="Yagi K."/>
            <person name="Yamanishi H."/>
            <person name="Zabarovsky E."/>
            <person name="Zhu S."/>
            <person name="Zimmer A."/>
            <person name="Hide W."/>
            <person name="Bult C."/>
            <person name="Grimmond S.M."/>
            <person name="Teasdale R.D."/>
            <person name="Liu E.T."/>
            <person name="Brusic V."/>
            <person name="Quackenbush J."/>
            <person name="Wahlestedt C."/>
            <person name="Mattick J.S."/>
            <person name="Hume D.A."/>
            <person name="Kai C."/>
            <person name="Sasaki D."/>
            <person name="Tomaru Y."/>
            <person name="Fukuda S."/>
            <person name="Kanamori-Katayama M."/>
            <person name="Suzuki M."/>
            <person name="Aoki J."/>
            <person name="Arakawa T."/>
            <person name="Iida J."/>
            <person name="Imamura K."/>
            <person name="Itoh M."/>
            <person name="Kato T."/>
            <person name="Kawaji H."/>
            <person name="Kawagashira N."/>
            <person name="Kawashima T."/>
            <person name="Kojima M."/>
            <person name="Kondo S."/>
            <person name="Konno H."/>
            <person name="Nakano K."/>
            <person name="Ninomiya N."/>
            <person name="Nishio T."/>
            <person name="Okada M."/>
            <person name="Plessy C."/>
            <person name="Shibata K."/>
            <person name="Shiraki T."/>
            <person name="Suzuki S."/>
            <person name="Tagami M."/>
            <person name="Waki K."/>
            <person name="Watahiki A."/>
            <person name="Okamura-Oho Y."/>
            <person name="Suzuki H."/>
            <person name="Kawai J."/>
            <person name="Hayashizaki Y."/>
        </authorList>
    </citation>
    <scope>NUCLEOTIDE SEQUENCE [LARGE SCALE MRNA]</scope>
    <source>
        <strain>C57BL/6J</strain>
        <tissue>Tongue</tissue>
    </source>
</reference>
<reference key="4">
    <citation type="submission" date="1999-10" db="EMBL/GenBank/DDBJ databases">
        <title>Identification and characterisation of novel skeletal muscle genes exhibiting increased expression in response to passive stretch.</title>
        <authorList>
            <person name="Kemp T.J."/>
            <person name="Sadusky T.J."/>
            <person name="Coulton G.R."/>
        </authorList>
    </citation>
    <scope>NUCLEOTIDE SEQUENCE [MRNA] OF 3534-3739</scope>
    <scope>INDUCTION BY MECHANICAL STRETCH</scope>
    <source>
        <strain>C57BL/10</strain>
        <tissue>Skeletal muscle</tissue>
    </source>
</reference>
<reference key="5">
    <citation type="journal article" date="2006" name="J. Biol. Chem.">
        <title>Myospryn is a direct transcriptional target for MEF2A that encodes a striated muscle, alpha-actinin-interacting, costamere-localized protein.</title>
        <authorList>
            <person name="Durham J.T."/>
            <person name="Brand O.M."/>
            <person name="Arnold M."/>
            <person name="Reynolds J.G."/>
            <person name="Muthukumar L."/>
            <person name="Weiler H."/>
            <person name="Richardson J.A."/>
            <person name="Naya F.J."/>
        </authorList>
    </citation>
    <scope>INTERACTION WITH ACTN2</scope>
    <scope>DEVELOPMENTAL STAGE</scope>
    <scope>TISSUE SPECIFICITY</scope>
</reference>
<reference key="6">
    <citation type="journal article" date="2007" name="Biochim. Biophys. Acta">
        <title>Identification and mapping of protein kinase A binding sites in the costameric protein myospryn.</title>
        <authorList>
            <person name="Reynolds J.G."/>
            <person name="McCalmon S.A."/>
            <person name="Tomczyk T."/>
            <person name="Naya F.J."/>
        </authorList>
    </citation>
    <scope>FUNCTION</scope>
    <scope>INTERACTION WITH PRKAR2A</scope>
    <scope>MUTAGENESIS OF LEU-3197; LEU-3309 AND CYS-3437</scope>
    <scope>SUBCELLULAR LOCATION</scope>
    <scope>PHOSPHORYLATION BY PKA</scope>
</reference>
<reference key="7">
    <citation type="journal article" date="2007" name="J. Biol. Chem.">
        <title>Proper perinuclear localization of the TRIM-like protein myospryn requires its binding partner desmin.</title>
        <authorList>
            <person name="Kouloumenta A."/>
            <person name="Mavroidis M."/>
            <person name="Capetanaki Y."/>
        </authorList>
    </citation>
    <scope>INTERACTION WITH DES</scope>
    <scope>SUBCELLULAR LOCATION</scope>
</reference>
<reference key="8">
    <citation type="journal article" date="2008" name="J. Biol. Chem.">
        <title>Deregulated protein kinase A signaling and myospryn expression in muscular dystrophy.</title>
        <authorList>
            <person name="Reynolds J.G."/>
            <person name="McCalmon S.A."/>
            <person name="Donaghey J.A."/>
            <person name="Naya F.J."/>
        </authorList>
    </citation>
    <scope>FUNCTION</scope>
    <scope>INTERACTION WITH DMD</scope>
    <scope>SUBCELLULAR LOCATION</scope>
    <scope>INDUCTION</scope>
    <scope>TISSUE SPECIFICITY</scope>
</reference>
<reference key="9">
    <citation type="journal article" date="2010" name="Cell">
        <title>A tissue-specific atlas of mouse protein phosphorylation and expression.</title>
        <authorList>
            <person name="Huttlin E.L."/>
            <person name="Jedrychowski M.P."/>
            <person name="Elias J.E."/>
            <person name="Goswami T."/>
            <person name="Rad R."/>
            <person name="Beausoleil S.A."/>
            <person name="Villen J."/>
            <person name="Haas W."/>
            <person name="Sowa M.E."/>
            <person name="Gygi S.P."/>
        </authorList>
    </citation>
    <scope>PHOSPHORYLATION [LARGE SCALE ANALYSIS] AT SER-155; SER-850; SER-2192; SER-2411; SER-2495 AND SER-2905</scope>
    <scope>IDENTIFICATION BY MASS SPECTROMETRY [LARGE SCALE ANALYSIS]</scope>
    <source>
        <tissue>Heart</tissue>
        <tissue>Lung</tissue>
    </source>
</reference>
<reference key="10">
    <citation type="journal article" date="2010" name="J. Biol. Chem.">
        <title>Interactions with M-band titin and calpain 3 link myospryn (CMYA5) to tibial and limb-girdle muscular dystrophies.</title>
        <authorList>
            <person name="Sarparanta J."/>
            <person name="Blandin G."/>
            <person name="Charton K."/>
            <person name="Vihola A."/>
            <person name="Marchand S."/>
            <person name="Milic A."/>
            <person name="Hackman P."/>
            <person name="Ehler E."/>
            <person name="Richard I."/>
            <person name="Udd B."/>
        </authorList>
    </citation>
    <scope>SUBCELLULAR LOCATION</scope>
</reference>
<reference key="11">
    <citation type="journal article" date="2011" name="FASEB J.">
        <title>Myospryn is a calcineurin-interacting protein that negatively modulates slow-fiber-type transformation and skeletal muscle regeneration.</title>
        <authorList>
            <person name="Kielbasa O.M."/>
            <person name="Reynolds J.G."/>
            <person name="Wu C.L."/>
            <person name="Snyder C.M."/>
            <person name="Cho M.Y."/>
            <person name="Weiler H."/>
            <person name="Kandarian S."/>
            <person name="Naya F.J."/>
        </authorList>
    </citation>
    <scope>FUNCTION</scope>
    <scope>INTERACTION WITH PPP3CA</scope>
</reference>
<reference key="12">
    <citation type="journal article" date="2017" name="Sci. Rep.">
        <title>Ryanodine receptors are part of the myospryn complex in cardiac muscle.</title>
        <authorList>
            <person name="Benson M.A."/>
            <person name="Tinsley C.L."/>
            <person name="Waite A.J."/>
            <person name="Carlisle F.A."/>
            <person name="Sweet S.M.M."/>
            <person name="Ehler E."/>
            <person name="George C.H."/>
            <person name="Lai F.A."/>
            <person name="Martin-Rendon E."/>
            <person name="Blake D.J."/>
        </authorList>
    </citation>
    <scope>SUBUNIT</scope>
    <scope>INTERACTION WITH FSD2</scope>
    <scope>FUNCTION</scope>
    <scope>TISSUE SPECIFICITY</scope>
</reference>
<accession>Q70KF4</accession>
<accession>Q70X91</accession>
<accession>Q9CV01</accession>
<accession>Q9CV02</accession>
<accession>Q9ER93</accession>
<accession>Q9ER96</accession>
<name>CMYA5_MOUSE</name>